<protein>
    <recommendedName>
        <fullName evidence="1">DNA-directed RNA polymerase subunit epsilon</fullName>
        <shortName evidence="1">RNAP epsilon subunit</shortName>
        <ecNumber evidence="1">2.7.7.6</ecNumber>
    </recommendedName>
    <alternativeName>
        <fullName evidence="1">RNA polymerase epsilon subunit</fullName>
    </alternativeName>
    <alternativeName>
        <fullName evidence="1">Transcriptase subunit epsilon</fullName>
    </alternativeName>
</protein>
<sequence length="76" mass="8828">MIFKVFYQKDNTRSPRRETTDALYLDLDVATKEEGVILARELLAKNTAYHVEFIDSLSDESVEYEKETGVFEITSF</sequence>
<dbReference type="EC" id="2.7.7.6" evidence="1"/>
<dbReference type="EMBL" id="AM406671">
    <property type="protein sequence ID" value="CAL96910.1"/>
    <property type="molecule type" value="Genomic_DNA"/>
</dbReference>
<dbReference type="RefSeq" id="WP_011675343.1">
    <property type="nucleotide sequence ID" value="NC_009004.1"/>
</dbReference>
<dbReference type="SMR" id="A2RI17"/>
<dbReference type="STRING" id="416870.llmg_0304"/>
<dbReference type="GeneID" id="61108612"/>
<dbReference type="KEGG" id="llm:llmg_0304"/>
<dbReference type="eggNOG" id="COG5503">
    <property type="taxonomic scope" value="Bacteria"/>
</dbReference>
<dbReference type="HOGENOM" id="CLU_187518_0_0_9"/>
<dbReference type="OrthoDB" id="2147503at2"/>
<dbReference type="PhylomeDB" id="A2RI17"/>
<dbReference type="Proteomes" id="UP000000364">
    <property type="component" value="Chromosome"/>
</dbReference>
<dbReference type="GO" id="GO:0000428">
    <property type="term" value="C:DNA-directed RNA polymerase complex"/>
    <property type="evidence" value="ECO:0007669"/>
    <property type="project" value="UniProtKB-KW"/>
</dbReference>
<dbReference type="GO" id="GO:0003677">
    <property type="term" value="F:DNA binding"/>
    <property type="evidence" value="ECO:0007669"/>
    <property type="project" value="UniProtKB-UniRule"/>
</dbReference>
<dbReference type="GO" id="GO:0003899">
    <property type="term" value="F:DNA-directed RNA polymerase activity"/>
    <property type="evidence" value="ECO:0007669"/>
    <property type="project" value="UniProtKB-UniRule"/>
</dbReference>
<dbReference type="GO" id="GO:0006351">
    <property type="term" value="P:DNA-templated transcription"/>
    <property type="evidence" value="ECO:0007669"/>
    <property type="project" value="UniProtKB-UniRule"/>
</dbReference>
<dbReference type="Gene3D" id="3.10.20.730">
    <property type="entry name" value="RNAP, epsilon subunit-like"/>
    <property type="match status" value="1"/>
</dbReference>
<dbReference type="HAMAP" id="MF_01553">
    <property type="entry name" value="RNApol_bact_RpoY"/>
    <property type="match status" value="1"/>
</dbReference>
<dbReference type="InterPro" id="IPR009907">
    <property type="entry name" value="RpoY"/>
</dbReference>
<dbReference type="NCBIfam" id="NF010188">
    <property type="entry name" value="PRK13667.1"/>
    <property type="match status" value="1"/>
</dbReference>
<dbReference type="Pfam" id="PF07288">
    <property type="entry name" value="RpoY"/>
    <property type="match status" value="1"/>
</dbReference>
<feature type="chain" id="PRO_1000068871" description="DNA-directed RNA polymerase subunit epsilon">
    <location>
        <begin position="1"/>
        <end position="76"/>
    </location>
</feature>
<gene>
    <name evidence="1" type="primary">rpoY</name>
    <name type="ordered locus">llmg_0304</name>
</gene>
<proteinExistence type="inferred from homology"/>
<comment type="function">
    <text evidence="1">A non-essential component of RNA polymerase (RNAP).</text>
</comment>
<comment type="catalytic activity">
    <reaction evidence="1">
        <text>RNA(n) + a ribonucleoside 5'-triphosphate = RNA(n+1) + diphosphate</text>
        <dbReference type="Rhea" id="RHEA:21248"/>
        <dbReference type="Rhea" id="RHEA-COMP:14527"/>
        <dbReference type="Rhea" id="RHEA-COMP:17342"/>
        <dbReference type="ChEBI" id="CHEBI:33019"/>
        <dbReference type="ChEBI" id="CHEBI:61557"/>
        <dbReference type="ChEBI" id="CHEBI:140395"/>
        <dbReference type="EC" id="2.7.7.6"/>
    </reaction>
</comment>
<comment type="subunit">
    <text evidence="1">RNAP is composed of a core of 2 alpha, a beta and a beta' subunit. The core is associated with a delta subunit, and at least one of epsilon or omega. When a sigma factor is associated with the core the holoenzyme is formed, which can initiate transcription.</text>
</comment>
<comment type="similarity">
    <text evidence="1">Belongs to the RNA polymerase subunit epsilon family.</text>
</comment>
<name>RPOY_LACLM</name>
<keyword id="KW-0240">DNA-directed RNA polymerase</keyword>
<keyword id="KW-0548">Nucleotidyltransferase</keyword>
<keyword id="KW-0804">Transcription</keyword>
<keyword id="KW-0808">Transferase</keyword>
<organism>
    <name type="scientific">Lactococcus lactis subsp. cremoris (strain MG1363)</name>
    <dbReference type="NCBI Taxonomy" id="416870"/>
    <lineage>
        <taxon>Bacteria</taxon>
        <taxon>Bacillati</taxon>
        <taxon>Bacillota</taxon>
        <taxon>Bacilli</taxon>
        <taxon>Lactobacillales</taxon>
        <taxon>Streptococcaceae</taxon>
        <taxon>Lactococcus</taxon>
        <taxon>Lactococcus cremoris subsp. cremoris</taxon>
    </lineage>
</organism>
<accession>A2RI17</accession>
<reference key="1">
    <citation type="journal article" date="2007" name="J. Bacteriol.">
        <title>The complete genome sequence of the lactic acid bacterial paradigm Lactococcus lactis subsp. cremoris MG1363.</title>
        <authorList>
            <person name="Wegmann U."/>
            <person name="O'Connell-Motherway M."/>
            <person name="Zomer A."/>
            <person name="Buist G."/>
            <person name="Shearman C."/>
            <person name="Canchaya C."/>
            <person name="Ventura M."/>
            <person name="Goesmann A."/>
            <person name="Gasson M.J."/>
            <person name="Kuipers O.P."/>
            <person name="van Sinderen D."/>
            <person name="Kok J."/>
        </authorList>
    </citation>
    <scope>NUCLEOTIDE SEQUENCE [LARGE SCALE GENOMIC DNA]</scope>
    <source>
        <strain>MG1363</strain>
    </source>
</reference>
<evidence type="ECO:0000255" key="1">
    <source>
        <dbReference type="HAMAP-Rule" id="MF_01553"/>
    </source>
</evidence>